<dbReference type="EC" id="7.1.1.8" evidence="4 5 7 9"/>
<dbReference type="EMBL" id="U75974">
    <property type="protein sequence ID" value="AAB47848.1"/>
    <property type="molecule type" value="Genomic_DNA"/>
</dbReference>
<dbReference type="EMBL" id="AE014299">
    <property type="protein sequence ID" value="AAN57551.1"/>
    <property type="molecule type" value="Genomic_DNA"/>
</dbReference>
<dbReference type="RefSeq" id="NP_720107.1">
    <property type="nucleotide sequence ID" value="NC_004347.2"/>
</dbReference>
<dbReference type="RefSeq" id="WP_011074189.1">
    <property type="nucleotide sequence ID" value="NC_004347.2"/>
</dbReference>
<dbReference type="STRING" id="211586.SO_4591"/>
<dbReference type="TCDB" id="5.B.5.1.1">
    <property type="family name" value="the extracellular metal oxido-reductase (emor) family"/>
</dbReference>
<dbReference type="PaxDb" id="211586-SO_4591"/>
<dbReference type="KEGG" id="son:SO_4591"/>
<dbReference type="PATRIC" id="fig|211586.12.peg.4450"/>
<dbReference type="eggNOG" id="COG3005">
    <property type="taxonomic scope" value="Bacteria"/>
</dbReference>
<dbReference type="HOGENOM" id="CLU_096753_1_0_6"/>
<dbReference type="OrthoDB" id="9782159at2"/>
<dbReference type="PhylomeDB" id="Q8E8S0"/>
<dbReference type="BioCyc" id="MetaCyc:MONOMER-20175"/>
<dbReference type="BioCyc" id="SONE211586:G1GMP-4242-MONOMER"/>
<dbReference type="Proteomes" id="UP000008186">
    <property type="component" value="Chromosome"/>
</dbReference>
<dbReference type="GO" id="GO:0005886">
    <property type="term" value="C:plasma membrane"/>
    <property type="evidence" value="ECO:0007669"/>
    <property type="project" value="UniProtKB-SubCell"/>
</dbReference>
<dbReference type="GO" id="GO:0009055">
    <property type="term" value="F:electron transfer activity"/>
    <property type="evidence" value="ECO:0000318"/>
    <property type="project" value="GO_Central"/>
</dbReference>
<dbReference type="GO" id="GO:0020037">
    <property type="term" value="F:heme binding"/>
    <property type="evidence" value="ECO:0007669"/>
    <property type="project" value="InterPro"/>
</dbReference>
<dbReference type="GO" id="GO:0046872">
    <property type="term" value="F:metal ion binding"/>
    <property type="evidence" value="ECO:0007669"/>
    <property type="project" value="UniProtKB-KW"/>
</dbReference>
<dbReference type="GO" id="GO:0009061">
    <property type="term" value="P:anaerobic respiration"/>
    <property type="evidence" value="ECO:0000318"/>
    <property type="project" value="GO_Central"/>
</dbReference>
<dbReference type="GO" id="GO:0019333">
    <property type="term" value="P:denitrification pathway"/>
    <property type="evidence" value="ECO:0007669"/>
    <property type="project" value="InterPro"/>
</dbReference>
<dbReference type="FunFam" id="1.10.3820.10:FF:000001">
    <property type="entry name" value="Cytochrome c-type protein"/>
    <property type="match status" value="1"/>
</dbReference>
<dbReference type="Gene3D" id="1.10.3820.10">
    <property type="entry name" value="Di-heme elbow motif domain"/>
    <property type="match status" value="1"/>
</dbReference>
<dbReference type="InterPro" id="IPR051174">
    <property type="entry name" value="Cytochrome_c-type_ET"/>
</dbReference>
<dbReference type="InterPro" id="IPR036280">
    <property type="entry name" value="Multihaem_cyt_sf"/>
</dbReference>
<dbReference type="InterPro" id="IPR024717">
    <property type="entry name" value="NapC/NirT/NrfH"/>
</dbReference>
<dbReference type="InterPro" id="IPR005126">
    <property type="entry name" value="NapC/NirT_cyt_c_N"/>
</dbReference>
<dbReference type="InterPro" id="IPR038266">
    <property type="entry name" value="NapC/NirT_cytc_sf"/>
</dbReference>
<dbReference type="PANTHER" id="PTHR30333">
    <property type="entry name" value="CYTOCHROME C-TYPE PROTEIN"/>
    <property type="match status" value="1"/>
</dbReference>
<dbReference type="PANTHER" id="PTHR30333:SF3">
    <property type="entry name" value="CYTOCHROME C-TYPE PROTEIN TORY"/>
    <property type="match status" value="1"/>
</dbReference>
<dbReference type="Pfam" id="PF03264">
    <property type="entry name" value="Cytochrom_NNT"/>
    <property type="match status" value="1"/>
</dbReference>
<dbReference type="PIRSF" id="PIRSF000013">
    <property type="entry name" value="4_hem_cytochrm_NapC"/>
    <property type="match status" value="1"/>
</dbReference>
<dbReference type="SUPFAM" id="SSF48695">
    <property type="entry name" value="Multiheme cytochromes"/>
    <property type="match status" value="1"/>
</dbReference>
<dbReference type="PROSITE" id="PS51008">
    <property type="entry name" value="MULTIHEME_CYTC"/>
    <property type="match status" value="1"/>
</dbReference>
<keyword id="KW-0997">Cell inner membrane</keyword>
<keyword id="KW-1003">Cell membrane</keyword>
<keyword id="KW-0903">Direct protein sequencing</keyword>
<keyword id="KW-0249">Electron transport</keyword>
<keyword id="KW-0349">Heme</keyword>
<keyword id="KW-0408">Iron</keyword>
<keyword id="KW-0472">Membrane</keyword>
<keyword id="KW-0479">Metal-binding</keyword>
<keyword id="KW-1185">Reference proteome</keyword>
<keyword id="KW-1278">Translocase</keyword>
<keyword id="KW-0812">Transmembrane</keyword>
<keyword id="KW-1133">Transmembrane helix</keyword>
<keyword id="KW-0813">Transport</keyword>
<sequence>MNWRALFKPSAKYSILALLVVGIVIGVVGYFATQQTLHATSTDAFCMSCHSNHSLKNEVLASAHGGGKAGVTVQCQDCHLPHGPVDYLIKKIIVSKDLYGFLTIDGFNTQAWLDENRKEQADKALAYFRGNDSANCQHCHTRIYENQPETMKPMAVRMHTNNFKKDPETRKTCVDCHKGVAHPYPKG</sequence>
<proteinExistence type="evidence at protein level"/>
<accession>Q8E8S0</accession>
<accession>P95832</accession>
<feature type="chain" id="PRO_0000460341" description="Tetraheme c-type cytochrome CymA">
    <location>
        <begin position="1"/>
        <end position="187"/>
    </location>
</feature>
<feature type="topological domain" description="Cytoplasmic" evidence="17">
    <location>
        <begin position="1"/>
        <end position="12"/>
    </location>
</feature>
<feature type="transmembrane region" description="Helical" evidence="2">
    <location>
        <begin position="13"/>
        <end position="33"/>
    </location>
</feature>
<feature type="topological domain" description="Periplasmic" evidence="17">
    <location>
        <begin position="34"/>
        <end position="187"/>
    </location>
</feature>
<feature type="binding site" description="covalent" evidence="1">
    <location>
        <position position="46"/>
    </location>
    <ligand>
        <name>heme c</name>
        <dbReference type="ChEBI" id="CHEBI:61717"/>
        <label>1</label>
    </ligand>
</feature>
<feature type="binding site" description="covalent" evidence="1">
    <location>
        <position position="49"/>
    </location>
    <ligand>
        <name>heme c</name>
        <dbReference type="ChEBI" id="CHEBI:61717"/>
        <label>1</label>
    </ligand>
</feature>
<feature type="binding site" description="axial binding residue" evidence="1">
    <location>
        <position position="64"/>
    </location>
    <ligand>
        <name>heme c</name>
        <dbReference type="ChEBI" id="CHEBI:61717"/>
        <label>3</label>
    </ligand>
    <ligandPart>
        <name>Fe</name>
        <dbReference type="ChEBI" id="CHEBI:18248"/>
    </ligandPart>
</feature>
<feature type="binding site" description="covalent" evidence="1">
    <location>
        <position position="75"/>
    </location>
    <ligand>
        <name>heme c</name>
        <dbReference type="ChEBI" id="CHEBI:61717"/>
        <label>2</label>
    </ligand>
</feature>
<feature type="binding site" description="covalent" evidence="1">
    <location>
        <position position="78"/>
    </location>
    <ligand>
        <name>heme c</name>
        <dbReference type="ChEBI" id="CHEBI:61717"/>
        <label>2</label>
    </ligand>
</feature>
<feature type="binding site" description="axial binding residue" evidence="1">
    <location>
        <position position="79"/>
    </location>
    <ligand>
        <name>heme c</name>
        <dbReference type="ChEBI" id="CHEBI:61717"/>
        <label>2</label>
    </ligand>
    <ligandPart>
        <name>Fe</name>
        <dbReference type="ChEBI" id="CHEBI:18248"/>
    </ligandPart>
</feature>
<feature type="binding site" description="axial binding residue" evidence="1">
    <location>
        <position position="97"/>
    </location>
    <ligand>
        <name>heme c</name>
        <dbReference type="ChEBI" id="CHEBI:61717"/>
        <label>1</label>
    </ligand>
    <ligandPart>
        <name>Fe</name>
        <dbReference type="ChEBI" id="CHEBI:18248"/>
    </ligandPart>
</feature>
<feature type="binding site" description="covalent" evidence="1">
    <location>
        <position position="136"/>
    </location>
    <ligand>
        <name>heme c</name>
        <dbReference type="ChEBI" id="CHEBI:61717"/>
        <label>3</label>
    </ligand>
</feature>
<feature type="binding site" description="covalent" evidence="1">
    <location>
        <position position="139"/>
    </location>
    <ligand>
        <name>heme c</name>
        <dbReference type="ChEBI" id="CHEBI:61717"/>
        <label>3</label>
    </ligand>
</feature>
<feature type="binding site" description="axial binding residue" evidence="1">
    <location>
        <position position="140"/>
    </location>
    <ligand>
        <name>heme c</name>
        <dbReference type="ChEBI" id="CHEBI:61717"/>
        <label>3</label>
    </ligand>
    <ligandPart>
        <name>Fe</name>
        <dbReference type="ChEBI" id="CHEBI:18248"/>
    </ligandPart>
</feature>
<feature type="binding site" description="covalent" evidence="1">
    <location>
        <position position="173"/>
    </location>
    <ligand>
        <name>heme c</name>
        <dbReference type="ChEBI" id="CHEBI:61717"/>
        <label>4</label>
    </ligand>
</feature>
<feature type="binding site" description="covalent" evidence="1">
    <location>
        <position position="176"/>
    </location>
    <ligand>
        <name>heme c</name>
        <dbReference type="ChEBI" id="CHEBI:61717"/>
        <label>4</label>
    </ligand>
</feature>
<feature type="binding site" description="axial binding residue" evidence="1">
    <location>
        <position position="177"/>
    </location>
    <ligand>
        <name>heme c</name>
        <dbReference type="ChEBI" id="CHEBI:61717"/>
        <label>4</label>
    </ligand>
    <ligandPart>
        <name>Fe</name>
        <dbReference type="ChEBI" id="CHEBI:18248"/>
    </ligandPart>
</feature>
<feature type="binding site" description="axial binding residue" evidence="1">
    <location>
        <position position="182"/>
    </location>
    <ligand>
        <name>heme c</name>
        <dbReference type="ChEBI" id="CHEBI:61717"/>
        <label>2</label>
    </ligand>
    <ligandPart>
        <name>Fe</name>
        <dbReference type="ChEBI" id="CHEBI:18248"/>
    </ligandPart>
</feature>
<organism>
    <name type="scientific">Shewanella oneidensis (strain ATCC 700550 / JCM 31522 / CIP 106686 / LMG 19005 / NCIMB 14063 / MR-1)</name>
    <dbReference type="NCBI Taxonomy" id="211586"/>
    <lineage>
        <taxon>Bacteria</taxon>
        <taxon>Pseudomonadati</taxon>
        <taxon>Pseudomonadota</taxon>
        <taxon>Gammaproteobacteria</taxon>
        <taxon>Alteromonadales</taxon>
        <taxon>Shewanellaceae</taxon>
        <taxon>Shewanella</taxon>
    </lineage>
</organism>
<gene>
    <name evidence="15" type="primary">cymA</name>
    <name evidence="20" type="ordered locus">SO_4591</name>
</gene>
<reference key="1">
    <citation type="journal article" date="1997" name="J. Bacteriol.">
        <title>Cloning and sequence of cymA, a gene encoding a tetraheme cytochrome c required for reduction of iron(III), fumarate, and nitrate by Shewanella putrefaciens MR-1.</title>
        <authorList>
            <person name="Myers C.R."/>
            <person name="Myers J.M."/>
        </authorList>
    </citation>
    <scope>NUCLEOTIDE SEQUENCE [GENOMIC DNA]</scope>
    <scope>FUNCTION</scope>
    <scope>SUBCELLULAR LOCATION</scope>
    <scope>INDUCTION</scope>
    <scope>DISRUPTION PHENOTYPE</scope>
    <source>
        <strain>ATCC 700550 / JCM 31522 / CIP 106686 / LMG 19005 / NCIMB 14063 / MR-1</strain>
    </source>
</reference>
<reference key="2">
    <citation type="journal article" date="2002" name="Nat. Biotechnol.">
        <title>Genome sequence of the dissimilatory metal ion-reducing bacterium Shewanella oneidensis.</title>
        <authorList>
            <person name="Heidelberg J.F."/>
            <person name="Paulsen I.T."/>
            <person name="Nelson K.E."/>
            <person name="Gaidos E.J."/>
            <person name="Nelson W.C."/>
            <person name="Read T.D."/>
            <person name="Eisen J.A."/>
            <person name="Seshadri R."/>
            <person name="Ward N.L."/>
            <person name="Methe B.A."/>
            <person name="Clayton R.A."/>
            <person name="Meyer T."/>
            <person name="Tsapin A."/>
            <person name="Scott J."/>
            <person name="Beanan M.J."/>
            <person name="Brinkac L.M."/>
            <person name="Daugherty S.C."/>
            <person name="DeBoy R.T."/>
            <person name="Dodson R.J."/>
            <person name="Durkin A.S."/>
            <person name="Haft D.H."/>
            <person name="Kolonay J.F."/>
            <person name="Madupu R."/>
            <person name="Peterson J.D."/>
            <person name="Umayam L.A."/>
            <person name="White O."/>
            <person name="Wolf A.M."/>
            <person name="Vamathevan J.J."/>
            <person name="Weidman J.F."/>
            <person name="Impraim M."/>
            <person name="Lee K."/>
            <person name="Berry K.J."/>
            <person name="Lee C."/>
            <person name="Mueller J."/>
            <person name="Khouri H.M."/>
            <person name="Gill J."/>
            <person name="Utterback T.R."/>
            <person name="McDonald L.A."/>
            <person name="Feldblyum T.V."/>
            <person name="Smith H.O."/>
            <person name="Venter J.C."/>
            <person name="Nealson K.H."/>
            <person name="Fraser C.M."/>
        </authorList>
    </citation>
    <scope>NUCLEOTIDE SEQUENCE [LARGE SCALE GENOMIC DNA]</scope>
    <source>
        <strain>ATCC 700550 / JCM 31522 / CIP 106686 / LMG 19005 / NCIMB 14063 / MR-1</strain>
    </source>
</reference>
<reference key="3">
    <citation type="journal article" date="2012" name="Biochem. J.">
        <title>A functional description of CymA, an electron-transfer hub supporting anaerobic respiratory flexibility in Shewanella.</title>
        <authorList>
            <person name="Marritt S.J."/>
            <person name="Lowe T.G."/>
            <person name="Bye J."/>
            <person name="McMillan D.G."/>
            <person name="Shi L."/>
            <person name="Fredrickson J."/>
            <person name="Zachara J."/>
            <person name="Richardson D.J."/>
            <person name="Cheesman M.R."/>
            <person name="Jeuken L.J."/>
            <person name="Butt J.N."/>
        </authorList>
    </citation>
    <scope>PROTEIN SEQUENCE OF 1-5</scope>
    <scope>FUNCTION</scope>
    <scope>CATALYTIC ACTIVITY</scope>
    <scope>COFACTOR</scope>
    <scope>ACTIVITY REGULATION</scope>
    <scope>SUBUNIT</scope>
    <scope>SUBCELLULAR LOCATION</scope>
    <scope>IDENTIFICATION BY MASS SPECTROMETRY</scope>
    <source>
        <strain>ATCC 700550 / JCM 31522 / CIP 106686 / LMG 19005 / NCIMB 14063 / MR-1</strain>
    </source>
</reference>
<reference key="4">
    <citation type="journal article" date="2002" name="Biochem. Soc. Trans.">
        <title>The membrane-bound tetrahaem c-type cytochrome CymA interacts directly with the soluble fumarate reductase in Shewanella.</title>
        <authorList>
            <person name="Schwalb C."/>
            <person name="Chapman S.K."/>
            <person name="Reid G.A."/>
        </authorList>
    </citation>
    <scope>PARTIAL PROTEIN SEQUENCE</scope>
    <scope>FUNCTION</scope>
    <scope>CATALYTIC ACTIVITY</scope>
    <source>
        <strain>ATCC 700550 / JCM 31522 / CIP 106686 / LMG 19005 / NCIMB 14063 / MR-1</strain>
    </source>
</reference>
<reference key="5">
    <citation type="journal article" date="2000" name="J. Bacteriol.">
        <title>Role of the tetraheme cytochrome CymA in anaerobic electron transport in cells of Shewanella putrefaciens MR-1 with normal levels of menaquinone.</title>
        <authorList>
            <person name="Myers J.M."/>
            <person name="Myers C.R."/>
        </authorList>
    </citation>
    <scope>FUNCTION</scope>
    <scope>SUBCELLULAR LOCATION</scope>
    <scope>DISRUPTION PHENOTYPE</scope>
    <source>
        <strain>ATCC 700550 / JCM 31522 / CIP 106686 / LMG 19005 / NCIMB 14063 / MR-1</strain>
    </source>
</reference>
<reference key="6">
    <citation type="journal article" date="2003" name="Biochemistry">
        <title>The tetraheme cytochrome CymA is required for anaerobic respiration with dimethyl sulfoxide and nitrite in Shewanella oneidensis.</title>
        <authorList>
            <person name="Schwalb C."/>
            <person name="Chapman S.K."/>
            <person name="Reid G.A."/>
        </authorList>
    </citation>
    <scope>FUNCTION</scope>
    <scope>CATALYTIC ACTIVITY</scope>
    <scope>DISRUPTION PHENOTYPE</scope>
    <source>
        <strain>ATCC 700550 / JCM 31522 / CIP 106686 / LMG 19005 / NCIMB 14063 / MR-1</strain>
    </source>
</reference>
<reference key="7">
    <citation type="journal article" date="2009" name="Appl. Environ. Microbiol.">
        <title>Periplasmic electron transfer via the c-type cytochromes MtrA and FccA of Shewanella oneidensis MR-1.</title>
        <authorList>
            <person name="Schuetz B."/>
            <person name="Schicklberger M."/>
            <person name="Kuermann J."/>
            <person name="Spormann A.M."/>
            <person name="Gescher J."/>
        </authorList>
    </citation>
    <scope>FUNCTION</scope>
    <scope>CATALYTIC ACTIVITY</scope>
    <source>
        <strain>ATCC 700550 / JCM 31522 / CIP 106686 / LMG 19005 / NCIMB 14063 / MR-1</strain>
    </source>
</reference>
<reference key="8">
    <citation type="journal article" date="2009" name="ISME J.">
        <title>Reduction of nitrate in Shewanella oneidensis depends on atypical NAP and NRF systems with NapB as a preferred electron transport protein from CymA to NapA.</title>
        <authorList>
            <person name="Gao H."/>
            <person name="Yang Z.K."/>
            <person name="Barua S."/>
            <person name="Reed S.B."/>
            <person name="Romine M.F."/>
            <person name="Nealson K.H."/>
            <person name="Fredrickson J.K."/>
            <person name="Tiedje J.M."/>
            <person name="Zhou J."/>
        </authorList>
    </citation>
    <scope>FUNCTION</scope>
    <scope>DISRUPTION PHENOTYPE</scope>
    <source>
        <strain>ATCC 700550 / JCM 31522 / CIP 106686 / LMG 19005 / NCIMB 14063 / MR-1</strain>
    </source>
</reference>
<reference key="9">
    <citation type="journal article" date="2012" name="Can. J. Microbiol.">
        <title>Involvement of cytochrome c CymA in the anaerobic metabolism of RDX by Shewanella oneidensis MR-1.</title>
        <authorList>
            <person name="Perreault N.N."/>
            <person name="Crocker F.H."/>
            <person name="Indest K.J."/>
            <person name="Hawari J."/>
        </authorList>
    </citation>
    <scope>DISRUPTION PHENOTYPE</scope>
    <scope>BIOTECHNOLOGY</scope>
    <source>
        <strain>ATCC 700550 / JCM 31522 / CIP 106686 / LMG 19005 / NCIMB 14063 / MR-1</strain>
    </source>
</reference>
<reference key="10">
    <citation type="journal article" date="2014" name="Sci. Rep.">
        <title>Selenite reduction by Shewanella oneidensis MR-1 is mediated by fumarate reductase in periplasm.</title>
        <authorList>
            <person name="Li D.B."/>
            <person name="Cheng Y.Y."/>
            <person name="Wu C."/>
            <person name="Li W.W."/>
            <person name="Li N."/>
            <person name="Yang Z.C."/>
            <person name="Tong Z.H."/>
            <person name="Yu H.Q."/>
        </authorList>
    </citation>
    <scope>FUNCTION</scope>
    <scope>DISRUPTION PHENOTYPE</scope>
    <source>
        <strain>ATCC 700550 / JCM 31522 / CIP 106686 / LMG 19005 / NCIMB 14063 / MR-1</strain>
    </source>
</reference>
<reference key="11">
    <citation type="journal article" date="2015" name="Front. Microbiol.">
        <title>Characterization of the periplasmic redox network that sustains the versatile anaerobic metabolism of Shewanella oneidensis MR-1.</title>
        <authorList>
            <person name="Alves M.N."/>
            <person name="Neto S.E."/>
            <person name="Alves A.S."/>
            <person name="Fonseca B.M."/>
            <person name="Carrelo A."/>
            <person name="Pacheco I."/>
            <person name="Paquete C.M."/>
            <person name="Soares C.M."/>
            <person name="Louro R.O."/>
        </authorList>
    </citation>
    <scope>FUNCTION</scope>
    <source>
        <strain>ATCC 700550 / JCM 31522 / CIP 106686 / LMG 19005 / NCIMB 14063 / MR-1</strain>
    </source>
</reference>
<evidence type="ECO:0000250" key="1">
    <source>
        <dbReference type="UniProtKB" id="Q72EF4"/>
    </source>
</evidence>
<evidence type="ECO:0000255" key="2"/>
<evidence type="ECO:0000269" key="3">
    <source>
    </source>
</evidence>
<evidence type="ECO:0000269" key="4">
    <source>
    </source>
</evidence>
<evidence type="ECO:0000269" key="5">
    <source>
    </source>
</evidence>
<evidence type="ECO:0000269" key="6">
    <source>
    </source>
</evidence>
<evidence type="ECO:0000269" key="7">
    <source>
    </source>
</evidence>
<evidence type="ECO:0000269" key="8">
    <source>
    </source>
</evidence>
<evidence type="ECO:0000269" key="9">
    <source>
    </source>
</evidence>
<evidence type="ECO:0000269" key="10">
    <source>
    </source>
</evidence>
<evidence type="ECO:0000269" key="11">
    <source>
    </source>
</evidence>
<evidence type="ECO:0000269" key="12">
    <source>
    </source>
</evidence>
<evidence type="ECO:0000303" key="13">
    <source>
    </source>
</evidence>
<evidence type="ECO:0000303" key="14">
    <source>
    </source>
</evidence>
<evidence type="ECO:0000303" key="15">
    <source>
    </source>
</evidence>
<evidence type="ECO:0000305" key="16"/>
<evidence type="ECO:0000305" key="17">
    <source>
    </source>
</evidence>
<evidence type="ECO:0000305" key="18">
    <source>
    </source>
</evidence>
<evidence type="ECO:0000305" key="19">
    <source>
    </source>
</evidence>
<evidence type="ECO:0000312" key="20">
    <source>
        <dbReference type="EMBL" id="AAN57551.1"/>
    </source>
</evidence>
<name>CYMA_SHEON</name>
<protein>
    <recommendedName>
        <fullName evidence="14">Tetraheme c-type cytochrome CymA</fullName>
        <shortName evidence="13">Tetraheme cytochrome CymA</shortName>
        <ecNumber evidence="4 5 7 9">7.1.1.8</ecNumber>
    </recommendedName>
    <alternativeName>
        <fullName evidence="16">Cytochrome c-type protein CymA</fullName>
    </alternativeName>
    <alternativeName>
        <fullName evidence="16">Quinol--cytochrome-c reductase</fullName>
    </alternativeName>
</protein>
<comment type="function">
    <text evidence="3 4 5 6 7 9 10 11 12">Quinol dehydrogenase involved in several anaerobic electron transfer pathways (PubMed:10613864, PubMed:12196158, PubMed:12899636, PubMed:19387485, PubMed:19837833, PubMed:24435070, PubMed:9023196). Acquires electrons from the membrane quinone pool and mediates their transfer to several periplasmic terminal reductases and redox shuttles, including the fumarate reductase FccA, the small tetraheme cytochrome (STC), the c-type cytochrome MtrA, the nitrate reductase NapA (either through NapB or directly), the nitrite reductase NrfA and probably also the DmsE subunit of dimethyl sulfoxide (DMSO) reductase (PubMed:12196158, PubMed:12899636, PubMed:19387485, PubMed:19837833, PubMed:22458729, PubMed:26175726). Required for growth on fumarate and on DMSO, and for the reduction of iron(III), manganese(IV), nitrite and nitrate (PubMed:10613864, PubMed:12899636, PubMed:9023196). Not essential for growth on trimethylamine-N-oxide (TMAO) (PubMed:10613864, PubMed:9023196).</text>
</comment>
<comment type="catalytic activity">
    <reaction evidence="4 5 7 9">
        <text>a quinol + 2 Fe(III)-[cytochrome c](out) = a quinone + 2 Fe(II)-[cytochrome c](out) + 2 H(+)(out)</text>
        <dbReference type="Rhea" id="RHEA:11484"/>
        <dbReference type="Rhea" id="RHEA-COMP:10350"/>
        <dbReference type="Rhea" id="RHEA-COMP:14399"/>
        <dbReference type="ChEBI" id="CHEBI:15378"/>
        <dbReference type="ChEBI" id="CHEBI:24646"/>
        <dbReference type="ChEBI" id="CHEBI:29033"/>
        <dbReference type="ChEBI" id="CHEBI:29034"/>
        <dbReference type="ChEBI" id="CHEBI:132124"/>
        <dbReference type="EC" id="7.1.1.8"/>
    </reaction>
</comment>
<comment type="cofactor">
    <cofactor evidence="9">
        <name>heme c</name>
        <dbReference type="ChEBI" id="CHEBI:61717"/>
    </cofactor>
    <text evidence="9">Binds 4 heme c groups per subunit (PubMed:22458729). Contains one high-spin and three low-spin hemes (PubMed:22458729).</text>
</comment>
<comment type="activity regulation">
    <text evidence="9">Spectroscopic studies suggest that CymA requires a non-heme cofactor for quinol oxidation.</text>
</comment>
<comment type="subunit">
    <text evidence="9">Homodimer.</text>
</comment>
<comment type="subcellular location">
    <subcellularLocation>
        <location evidence="3 9 12">Cell inner membrane</location>
        <topology evidence="2">Single-pass membrane protein</topology>
        <orientation evidence="17 18 19">Periplasmic side</orientation>
    </subcellularLocation>
</comment>
<comment type="induction">
    <text evidence="12">Expression is induced in fumarate- and TMAO-grown cells.</text>
</comment>
<comment type="disruption phenotype">
    <text evidence="3 5 6 8 10 12">Mutant loses the ability to grow with fumarate as a terminal electron acceptor and to reduce iron(III), manganese(IV) and nitrate (PubMed:10613864, PubMed:19387485, PubMed:9023196). It cannot grow with DMSO as the sole electron acceptor and utilize nitrite (PubMed:12899636, PubMed:19387485). Deletion of the gene also severely suppresses selenite reduction (PubMed:24435070). It retains the ability to grow with O(2) or TMAO as electron acceptors (PubMed:10613864, PubMed:9023196). Insertion mutant shows a greatly reduced ability to degrade the xenobiotic compound RDX in comparison with the wild-type strain (PubMed:22260206).</text>
</comment>
<comment type="biotechnology">
    <text evidence="8">CymA plays an important role in the anaerobic degradation of the xenobiotic compound hexahydro-1,3,5-trinitro-1,3,5-triazine (RDX), a cyclic nitramine explosive commonly used for military applications that is responsible for severe soil and groundwater contamination (PubMed:22260206). Therefore, supplementary data on the specific electron transfer mechanisms occurring in Shewanella that increase the rate and extent of RDX ring-cleavage products is suitable to develop better remediation strategy for RDX contaminated soils and groundwater (PubMed:22260206).</text>
</comment>
<comment type="miscellaneous">
    <text evidence="4 5">To simplify its purification, a soluble form of CymA was produced by removing the N-terminal membrane anchor (PubMed:12196158, PubMed:12899636). The truncated form is active and can complement the deletion mutant (PubMed:12196158, PubMed:12899636).</text>
</comment>
<comment type="similarity">
    <text evidence="16">Belongs to the NapC/NirT/NrfH family.</text>
</comment>